<feature type="chain" id="PRO_0000157093" description="tRNA(Phe) 7-((3-amino-3-carboxypropyl)-4-demethylwyosine(37)-N(4))-methyltransferase">
    <location>
        <begin position="1"/>
        <end position="193"/>
    </location>
</feature>
<reference key="1">
    <citation type="journal article" date="1996" name="Science">
        <title>Complete genome sequence of the methanogenic archaeon, Methanococcus jannaschii.</title>
        <authorList>
            <person name="Bult C.J."/>
            <person name="White O."/>
            <person name="Olsen G.J."/>
            <person name="Zhou L."/>
            <person name="Fleischmann R.D."/>
            <person name="Sutton G.G."/>
            <person name="Blake J.A."/>
            <person name="FitzGerald L.M."/>
            <person name="Clayton R.A."/>
            <person name="Gocayne J.D."/>
            <person name="Kerlavage A.R."/>
            <person name="Dougherty B.A."/>
            <person name="Tomb J.-F."/>
            <person name="Adams M.D."/>
            <person name="Reich C.I."/>
            <person name="Overbeek R."/>
            <person name="Kirkness E.F."/>
            <person name="Weinstock K.G."/>
            <person name="Merrick J.M."/>
            <person name="Glodek A."/>
            <person name="Scott J.L."/>
            <person name="Geoghagen N.S.M."/>
            <person name="Weidman J.F."/>
            <person name="Fuhrmann J.L."/>
            <person name="Nguyen D."/>
            <person name="Utterback T.R."/>
            <person name="Kelley J.M."/>
            <person name="Peterson J.D."/>
            <person name="Sadow P.W."/>
            <person name="Hanna M.C."/>
            <person name="Cotton M.D."/>
            <person name="Roberts K.M."/>
            <person name="Hurst M.A."/>
            <person name="Kaine B.P."/>
            <person name="Borodovsky M."/>
            <person name="Klenk H.-P."/>
            <person name="Fraser C.M."/>
            <person name="Smith H.O."/>
            <person name="Woese C.R."/>
            <person name="Venter J.C."/>
        </authorList>
    </citation>
    <scope>NUCLEOTIDE SEQUENCE [LARGE SCALE GENOMIC DNA]</scope>
    <source>
        <strain>ATCC 43067 / DSM 2661 / JAL-1 / JCM 10045 / NBRC 100440</strain>
    </source>
</reference>
<reference key="2">
    <citation type="journal article" date="2010" name="Mol. Biol. Evol.">
        <title>Biosynthesis of wyosine derivatives in tRNA: an ancient and highly diverse pathway in Archaea.</title>
        <authorList>
            <person name="de Crecy-Lagard V."/>
            <person name="Brochier-Armanet C."/>
            <person name="Urbonavicius J."/>
            <person name="Fernandez B."/>
            <person name="Phillips G."/>
            <person name="Lyons B."/>
            <person name="Noma A."/>
            <person name="Alvarez S."/>
            <person name="Droogmans L."/>
            <person name="Armengaud J."/>
            <person name="Grosjean H."/>
        </authorList>
    </citation>
    <scope>GENE NAME</scope>
</reference>
<dbReference type="EC" id="2.1.1.282" evidence="1"/>
<dbReference type="EMBL" id="L77117">
    <property type="protein sequence ID" value="AAB99529.1"/>
    <property type="molecule type" value="Genomic_DNA"/>
</dbReference>
<dbReference type="PIR" id="E64488">
    <property type="entry name" value="E64488"/>
</dbReference>
<dbReference type="RefSeq" id="WP_010871033.1">
    <property type="nucleotide sequence ID" value="NC_000909.1"/>
</dbReference>
<dbReference type="SMR" id="Q58905"/>
<dbReference type="FunCoup" id="Q58905">
    <property type="interactions" value="84"/>
</dbReference>
<dbReference type="STRING" id="243232.MJ_1510"/>
<dbReference type="PaxDb" id="243232-MJ_1510"/>
<dbReference type="EnsemblBacteria" id="AAB99529">
    <property type="protein sequence ID" value="AAB99529"/>
    <property type="gene ID" value="MJ_1510"/>
</dbReference>
<dbReference type="GeneID" id="1452417"/>
<dbReference type="KEGG" id="mja:MJ_1510"/>
<dbReference type="eggNOG" id="arCOG04156">
    <property type="taxonomic scope" value="Archaea"/>
</dbReference>
<dbReference type="HOGENOM" id="CLU_047426_2_0_2"/>
<dbReference type="InParanoid" id="Q58905"/>
<dbReference type="OrthoDB" id="19299at2157"/>
<dbReference type="PhylomeDB" id="Q58905"/>
<dbReference type="Proteomes" id="UP000000805">
    <property type="component" value="Chromosome"/>
</dbReference>
<dbReference type="GO" id="GO:0005737">
    <property type="term" value="C:cytoplasm"/>
    <property type="evidence" value="ECO:0000318"/>
    <property type="project" value="GO_Central"/>
</dbReference>
<dbReference type="GO" id="GO:0008175">
    <property type="term" value="F:tRNA methyltransferase activity"/>
    <property type="evidence" value="ECO:0000318"/>
    <property type="project" value="GO_Central"/>
</dbReference>
<dbReference type="GO" id="GO:0030488">
    <property type="term" value="P:tRNA methylation"/>
    <property type="evidence" value="ECO:0000318"/>
    <property type="project" value="GO_Central"/>
</dbReference>
<dbReference type="GO" id="GO:0031591">
    <property type="term" value="P:wybutosine biosynthetic process"/>
    <property type="evidence" value="ECO:0000318"/>
    <property type="project" value="GO_Central"/>
</dbReference>
<dbReference type="FunFam" id="3.30.1960.10:FF:000010">
    <property type="entry name" value="tRNA(Phe) 7-((3-amino-3-carboxypropyl)-4-demethylwyosine(37)-N(4))-methyltransferase 1"/>
    <property type="match status" value="1"/>
</dbReference>
<dbReference type="Gene3D" id="3.30.1960.10">
    <property type="entry name" value="tRNA wybutosine-synthesizing-like"/>
    <property type="match status" value="1"/>
</dbReference>
<dbReference type="HAMAP" id="MF_00266">
    <property type="entry name" value="TYW3_archaea"/>
    <property type="match status" value="1"/>
</dbReference>
<dbReference type="InterPro" id="IPR022908">
    <property type="entry name" value="Taw3"/>
</dbReference>
<dbReference type="InterPro" id="IPR003827">
    <property type="entry name" value="tRNA_yW-synthesising"/>
</dbReference>
<dbReference type="InterPro" id="IPR036602">
    <property type="entry name" value="tRNA_yW-synthesising-like_sf"/>
</dbReference>
<dbReference type="NCBIfam" id="NF003265">
    <property type="entry name" value="PRK04235.1-4"/>
    <property type="match status" value="1"/>
</dbReference>
<dbReference type="NCBIfam" id="NF047731">
    <property type="entry name" value="tRNAMtaseTaw3"/>
    <property type="match status" value="1"/>
</dbReference>
<dbReference type="PANTHER" id="PTHR48418">
    <property type="entry name" value="TRNA WYBUTOSINE-SYNTHESIZING PROTEIN 3"/>
    <property type="match status" value="1"/>
</dbReference>
<dbReference type="PANTHER" id="PTHR48418:SF1">
    <property type="entry name" value="TRNA WYBUTOSINE-SYNTHESIZING PROTEIN 3"/>
    <property type="match status" value="1"/>
</dbReference>
<dbReference type="Pfam" id="PF02676">
    <property type="entry name" value="TYW3"/>
    <property type="match status" value="1"/>
</dbReference>
<dbReference type="SUPFAM" id="SSF111278">
    <property type="entry name" value="SSo0622-like"/>
    <property type="match status" value="1"/>
</dbReference>
<protein>
    <recommendedName>
        <fullName evidence="1">tRNA(Phe) 7-((3-amino-3-carboxypropyl)-4-demethylwyosine(37)-N(4))-methyltransferase</fullName>
        <ecNumber evidence="1">2.1.1.282</ecNumber>
    </recommendedName>
    <alternativeName>
        <fullName evidence="1">tRNA wyosine derivatives biosynthesis protein Taw3</fullName>
    </alternativeName>
</protein>
<gene>
    <name evidence="1" type="primary">taw3</name>
    <name type="ordered locus">MJ1510</name>
</gene>
<keyword id="KW-0489">Methyltransferase</keyword>
<keyword id="KW-1185">Reference proteome</keyword>
<keyword id="KW-0949">S-adenosyl-L-methionine</keyword>
<keyword id="KW-0808">Transferase</keyword>
<keyword id="KW-0819">tRNA processing</keyword>
<evidence type="ECO:0000255" key="1">
    <source>
        <dbReference type="HAMAP-Rule" id="MF_00266"/>
    </source>
</evidence>
<comment type="function">
    <text evidence="1">S-adenosyl-L-methionine-dependent methyltransferase that acts as a component of the wyosine derivatives biosynthesis pathway. Probably methylates N-4 position of wybutosine-86 to produce wybutosine-72.</text>
</comment>
<comment type="catalytic activity">
    <reaction evidence="1">
        <text>4-demethyl-7-[(3S)-3-amino-3-carboxypropyl]wyosine(37) in tRNA(Phe) + S-adenosyl-L-methionine = 7-[(3S)-3-amino-3-carboxypropyl]wyosine(37) in tRNA(Phe) + S-adenosyl-L-homocysteine + H(+)</text>
        <dbReference type="Rhea" id="RHEA:36635"/>
        <dbReference type="Rhea" id="RHEA-COMP:10378"/>
        <dbReference type="Rhea" id="RHEA-COMP:10379"/>
        <dbReference type="ChEBI" id="CHEBI:15378"/>
        <dbReference type="ChEBI" id="CHEBI:57856"/>
        <dbReference type="ChEBI" id="CHEBI:59789"/>
        <dbReference type="ChEBI" id="CHEBI:73543"/>
        <dbReference type="ChEBI" id="CHEBI:73550"/>
        <dbReference type="EC" id="2.1.1.282"/>
    </reaction>
</comment>
<comment type="similarity">
    <text evidence="1">Belongs to the TYW3 family.</text>
</comment>
<name>TYW3_METJA</name>
<sequence length="193" mass="22401">MGFLEDKKRTLMNLELAIREGLVDEEIIPILNKINEIDNYYTTSSCIGRVGIMEIPKDKNPKLYSRWLGKWHHYASYDELFNALKNKKEGYIVFVMNSPILHIACKDIESAKKMLELAIHSGLKASSIKSISDKRVIVEILTTYKVDTPIGEDGEIFVDNNYLKFLLDYSNSKLKRAREILMRWANRLDELKK</sequence>
<proteinExistence type="inferred from homology"/>
<organism>
    <name type="scientific">Methanocaldococcus jannaschii (strain ATCC 43067 / DSM 2661 / JAL-1 / JCM 10045 / NBRC 100440)</name>
    <name type="common">Methanococcus jannaschii</name>
    <dbReference type="NCBI Taxonomy" id="243232"/>
    <lineage>
        <taxon>Archaea</taxon>
        <taxon>Methanobacteriati</taxon>
        <taxon>Methanobacteriota</taxon>
        <taxon>Methanomada group</taxon>
        <taxon>Methanococci</taxon>
        <taxon>Methanococcales</taxon>
        <taxon>Methanocaldococcaceae</taxon>
        <taxon>Methanocaldococcus</taxon>
    </lineage>
</organism>
<accession>Q58905</accession>